<evidence type="ECO:0000255" key="1">
    <source>
        <dbReference type="HAMAP-Rule" id="MF_01845"/>
    </source>
</evidence>
<reference key="1">
    <citation type="journal article" date="2006" name="Genome Res.">
        <title>Skewed genomic variability in strains of the toxigenic bacterial pathogen, Clostridium perfringens.</title>
        <authorList>
            <person name="Myers G.S.A."/>
            <person name="Rasko D.A."/>
            <person name="Cheung J.K."/>
            <person name="Ravel J."/>
            <person name="Seshadri R."/>
            <person name="DeBoy R.T."/>
            <person name="Ren Q."/>
            <person name="Varga J."/>
            <person name="Awad M.M."/>
            <person name="Brinkac L.M."/>
            <person name="Daugherty S.C."/>
            <person name="Haft D.H."/>
            <person name="Dodson R.J."/>
            <person name="Madupu R."/>
            <person name="Nelson W.C."/>
            <person name="Rosovitz M.J."/>
            <person name="Sullivan S.A."/>
            <person name="Khouri H."/>
            <person name="Dimitrov G.I."/>
            <person name="Watkins K.L."/>
            <person name="Mulligan S."/>
            <person name="Benton J."/>
            <person name="Radune D."/>
            <person name="Fisher D.J."/>
            <person name="Atkins H.S."/>
            <person name="Hiscox T."/>
            <person name="Jost B.H."/>
            <person name="Billington S.J."/>
            <person name="Songer J.G."/>
            <person name="McClane B.A."/>
            <person name="Titball R.W."/>
            <person name="Rood J.I."/>
            <person name="Melville S.B."/>
            <person name="Paulsen I.T."/>
        </authorList>
    </citation>
    <scope>NUCLEOTIDE SEQUENCE [LARGE SCALE GENOMIC DNA]</scope>
    <source>
        <strain>ATCC 13124 / DSM 756 / JCM 1290 / NCIMB 6125 / NCTC 8237 / S 107 / Type A</strain>
    </source>
</reference>
<proteinExistence type="inferred from homology"/>
<accession>Q0TSY6</accession>
<organism>
    <name type="scientific">Clostridium perfringens (strain ATCC 13124 / DSM 756 / JCM 1290 / NCIMB 6125 / NCTC 8237 / Type A)</name>
    <dbReference type="NCBI Taxonomy" id="195103"/>
    <lineage>
        <taxon>Bacteria</taxon>
        <taxon>Bacillati</taxon>
        <taxon>Bacillota</taxon>
        <taxon>Clostridia</taxon>
        <taxon>Eubacteriales</taxon>
        <taxon>Clostridiaceae</taxon>
        <taxon>Clostridium</taxon>
    </lineage>
</organism>
<dbReference type="EMBL" id="CP000246">
    <property type="protein sequence ID" value="ABG84469.1"/>
    <property type="molecule type" value="Genomic_DNA"/>
</dbReference>
<dbReference type="RefSeq" id="WP_011590378.1">
    <property type="nucleotide sequence ID" value="NC_008261.1"/>
</dbReference>
<dbReference type="SMR" id="Q0TSY6"/>
<dbReference type="PaxDb" id="195103-CPF_0803"/>
<dbReference type="KEGG" id="cpf:CPF_0803"/>
<dbReference type="eggNOG" id="COG3681">
    <property type="taxonomic scope" value="Bacteria"/>
</dbReference>
<dbReference type="HOGENOM" id="CLU_051840_0_0_9"/>
<dbReference type="Proteomes" id="UP000001823">
    <property type="component" value="Chromosome"/>
</dbReference>
<dbReference type="GO" id="GO:0080146">
    <property type="term" value="F:L-cysteine desulfhydrase activity"/>
    <property type="evidence" value="ECO:0007669"/>
    <property type="project" value="TreeGrafter"/>
</dbReference>
<dbReference type="GO" id="GO:0019450">
    <property type="term" value="P:L-cysteine catabolic process to pyruvate"/>
    <property type="evidence" value="ECO:0007669"/>
    <property type="project" value="TreeGrafter"/>
</dbReference>
<dbReference type="HAMAP" id="MF_01845">
    <property type="entry name" value="UPF0597"/>
    <property type="match status" value="1"/>
</dbReference>
<dbReference type="InterPro" id="IPR005130">
    <property type="entry name" value="Ser_deHydtase-like_asu"/>
</dbReference>
<dbReference type="InterPro" id="IPR021144">
    <property type="entry name" value="UPF0597"/>
</dbReference>
<dbReference type="PANTHER" id="PTHR30501">
    <property type="entry name" value="UPF0597 PROTEIN YHAM"/>
    <property type="match status" value="1"/>
</dbReference>
<dbReference type="PANTHER" id="PTHR30501:SF2">
    <property type="entry name" value="UPF0597 PROTEIN YHAM"/>
    <property type="match status" value="1"/>
</dbReference>
<dbReference type="Pfam" id="PF03313">
    <property type="entry name" value="SDH_alpha"/>
    <property type="match status" value="1"/>
</dbReference>
<dbReference type="PIRSF" id="PIRSF006054">
    <property type="entry name" value="UCP006054"/>
    <property type="match status" value="1"/>
</dbReference>
<comment type="similarity">
    <text evidence="1">Belongs to the UPF0597 family.</text>
</comment>
<name>Y803_CLOP1</name>
<feature type="chain" id="PRO_0000339807" description="UPF0597 protein CPF_0803">
    <location>
        <begin position="1"/>
        <end position="427"/>
    </location>
</feature>
<sequence>MRELYLKTLKKEVVPSEGCTEPIAIAYAASIAAEHLKGEIKEVNIYLSKNVIKNALGVGIPGTGGVGIEIAAALGISIQKSYKKLTILSNFTEDELKKAKEIVDKNIINIKQKNTNKALYIEVELLSETSKAKVIIEDTHTNVTLIECDDEIIMDNNSEVSEDLEEDYKLFKIADIYNFAKEVDFDHIKFILESAKMNEKVSEEGLKGDYGLQVGSKIIQKGNFNLFSNDASNKIIAASAAASDARMDGCAMPIMTTAGSGNQGIACSIPVAQTARLLDKSEEELARALVLSNLVTIRIKKHMGRLSPLCGAGIAGATGASCGITYLLGGDLENINYCINNMISDLSGMICDGAKETCALKIATGTNAAIQCANLAINGISATANDGIVAKDVEETIESIETLIQNGFKNVDDTILNIMLEKKKNNK</sequence>
<protein>
    <recommendedName>
        <fullName evidence="1">UPF0597 protein CPF_0803</fullName>
    </recommendedName>
</protein>
<gene>
    <name type="ordered locus">CPF_0803</name>
</gene>